<name>CYB_AERVU</name>
<accession>Q8HF67</accession>
<protein>
    <recommendedName>
        <fullName>Cytochrome b</fullName>
    </recommendedName>
    <alternativeName>
        <fullName>Complex III subunit 3</fullName>
    </alternativeName>
    <alternativeName>
        <fullName>Complex III subunit III</fullName>
    </alternativeName>
    <alternativeName>
        <fullName>Cytochrome b-c1 complex subunit 3</fullName>
    </alternativeName>
    <alternativeName>
        <fullName>Ubiquinol-cytochrome-c reductase complex cytochrome b subunit</fullName>
    </alternativeName>
</protein>
<geneLocation type="mitochondrion"/>
<keyword id="KW-0249">Electron transport</keyword>
<keyword id="KW-0349">Heme</keyword>
<keyword id="KW-0408">Iron</keyword>
<keyword id="KW-0472">Membrane</keyword>
<keyword id="KW-0479">Metal-binding</keyword>
<keyword id="KW-0496">Mitochondrion</keyword>
<keyword id="KW-0999">Mitochondrion inner membrane</keyword>
<keyword id="KW-0679">Respiratory chain</keyword>
<keyword id="KW-0812">Transmembrane</keyword>
<keyword id="KW-1133">Transmembrane helix</keyword>
<keyword id="KW-0813">Transport</keyword>
<keyword id="KW-0830">Ubiquinone</keyword>
<dbReference type="EMBL" id="AY135634">
    <property type="protein sequence ID" value="AAN39916.1"/>
    <property type="molecule type" value="Genomic_DNA"/>
</dbReference>
<dbReference type="SMR" id="Q8HF67"/>
<dbReference type="GO" id="GO:0005743">
    <property type="term" value="C:mitochondrial inner membrane"/>
    <property type="evidence" value="ECO:0007669"/>
    <property type="project" value="UniProtKB-SubCell"/>
</dbReference>
<dbReference type="GO" id="GO:0045275">
    <property type="term" value="C:respiratory chain complex III"/>
    <property type="evidence" value="ECO:0007669"/>
    <property type="project" value="InterPro"/>
</dbReference>
<dbReference type="GO" id="GO:0046872">
    <property type="term" value="F:metal ion binding"/>
    <property type="evidence" value="ECO:0007669"/>
    <property type="project" value="UniProtKB-KW"/>
</dbReference>
<dbReference type="GO" id="GO:0008121">
    <property type="term" value="F:ubiquinol-cytochrome-c reductase activity"/>
    <property type="evidence" value="ECO:0007669"/>
    <property type="project" value="InterPro"/>
</dbReference>
<dbReference type="GO" id="GO:0006122">
    <property type="term" value="P:mitochondrial electron transport, ubiquinol to cytochrome c"/>
    <property type="evidence" value="ECO:0007669"/>
    <property type="project" value="TreeGrafter"/>
</dbReference>
<dbReference type="CDD" id="cd00290">
    <property type="entry name" value="cytochrome_b_C"/>
    <property type="match status" value="1"/>
</dbReference>
<dbReference type="CDD" id="cd00284">
    <property type="entry name" value="Cytochrome_b_N"/>
    <property type="match status" value="1"/>
</dbReference>
<dbReference type="FunFam" id="1.20.810.10:FF:000002">
    <property type="entry name" value="Cytochrome b"/>
    <property type="match status" value="1"/>
</dbReference>
<dbReference type="Gene3D" id="1.20.810.10">
    <property type="entry name" value="Cytochrome Bc1 Complex, Chain C"/>
    <property type="match status" value="1"/>
</dbReference>
<dbReference type="InterPro" id="IPR005798">
    <property type="entry name" value="Cyt_b/b6_C"/>
</dbReference>
<dbReference type="InterPro" id="IPR036150">
    <property type="entry name" value="Cyt_b/b6_C_sf"/>
</dbReference>
<dbReference type="InterPro" id="IPR005797">
    <property type="entry name" value="Cyt_b/b6_N"/>
</dbReference>
<dbReference type="InterPro" id="IPR027387">
    <property type="entry name" value="Cytb/b6-like_sf"/>
</dbReference>
<dbReference type="InterPro" id="IPR030689">
    <property type="entry name" value="Cytochrome_b"/>
</dbReference>
<dbReference type="InterPro" id="IPR048260">
    <property type="entry name" value="Cytochrome_b_C_euk/bac"/>
</dbReference>
<dbReference type="InterPro" id="IPR048259">
    <property type="entry name" value="Cytochrome_b_N_euk/bac"/>
</dbReference>
<dbReference type="InterPro" id="IPR016174">
    <property type="entry name" value="Di-haem_cyt_TM"/>
</dbReference>
<dbReference type="PANTHER" id="PTHR19271">
    <property type="entry name" value="CYTOCHROME B"/>
    <property type="match status" value="1"/>
</dbReference>
<dbReference type="PANTHER" id="PTHR19271:SF16">
    <property type="entry name" value="CYTOCHROME B"/>
    <property type="match status" value="1"/>
</dbReference>
<dbReference type="Pfam" id="PF00032">
    <property type="entry name" value="Cytochrom_B_C"/>
    <property type="match status" value="1"/>
</dbReference>
<dbReference type="Pfam" id="PF00033">
    <property type="entry name" value="Cytochrome_B"/>
    <property type="match status" value="1"/>
</dbReference>
<dbReference type="PIRSF" id="PIRSF038885">
    <property type="entry name" value="COB"/>
    <property type="match status" value="1"/>
</dbReference>
<dbReference type="SUPFAM" id="SSF81648">
    <property type="entry name" value="a domain/subunit of cytochrome bc1 complex (Ubiquinol-cytochrome c reductase)"/>
    <property type="match status" value="1"/>
</dbReference>
<dbReference type="SUPFAM" id="SSF81342">
    <property type="entry name" value="Transmembrane di-heme cytochromes"/>
    <property type="match status" value="1"/>
</dbReference>
<dbReference type="PROSITE" id="PS51003">
    <property type="entry name" value="CYTB_CTER"/>
    <property type="match status" value="1"/>
</dbReference>
<dbReference type="PROSITE" id="PS51002">
    <property type="entry name" value="CYTB_NTER"/>
    <property type="match status" value="1"/>
</dbReference>
<proteinExistence type="inferred from homology"/>
<sequence length="380" mass="42527">MDPNLRKSHPLLKMINNSLIDLPTPSNISAWWNFGSLLGTCLATQIITGLLLAMHYTADTTVAFSSVAHTCRNVQYGWLIRNLHANGASFFFICIYLHIGRGFYYGSYLYQETWNTGVVLLLTLMATAFVGYVLPWGQMSFWGATVITNLFSAIPYIGQTLVEWAWGGFSVDNPTLTGFFALHFLLPFLIAGLTLIHLTLLHESGSNNPLGIVSNCDKIPFHPYFSTKDLLGFIIMLTPLMTLALFSPNLLGDPKNFTPANPLVTPPHIKPEWYFLFAYAILRSIPNQLGGVLALTASVLVLFLSPFLHKSKQRTMTFRPLSQILFWTLVANLLILTWVGSQPVEHPFIIIGQLASLTYFTILLILFPLIGALEYKMLNY</sequence>
<feature type="chain" id="PRO_0000060535" description="Cytochrome b">
    <location>
        <begin position="1"/>
        <end position="380"/>
    </location>
</feature>
<feature type="transmembrane region" description="Helical" evidence="2">
    <location>
        <begin position="34"/>
        <end position="54"/>
    </location>
</feature>
<feature type="transmembrane region" description="Helical" evidence="2">
    <location>
        <begin position="78"/>
        <end position="99"/>
    </location>
</feature>
<feature type="transmembrane region" description="Helical" evidence="2">
    <location>
        <begin position="114"/>
        <end position="134"/>
    </location>
</feature>
<feature type="transmembrane region" description="Helical" evidence="2">
    <location>
        <begin position="179"/>
        <end position="199"/>
    </location>
</feature>
<feature type="transmembrane region" description="Helical" evidence="2">
    <location>
        <begin position="227"/>
        <end position="247"/>
    </location>
</feature>
<feature type="transmembrane region" description="Helical" evidence="2">
    <location>
        <begin position="289"/>
        <end position="309"/>
    </location>
</feature>
<feature type="transmembrane region" description="Helical" evidence="2">
    <location>
        <begin position="321"/>
        <end position="341"/>
    </location>
</feature>
<feature type="transmembrane region" description="Helical" evidence="2">
    <location>
        <begin position="348"/>
        <end position="368"/>
    </location>
</feature>
<feature type="binding site" description="axial binding residue" evidence="2">
    <location>
        <position position="84"/>
    </location>
    <ligand>
        <name>heme b</name>
        <dbReference type="ChEBI" id="CHEBI:60344"/>
        <label>b562</label>
    </ligand>
    <ligandPart>
        <name>Fe</name>
        <dbReference type="ChEBI" id="CHEBI:18248"/>
    </ligandPart>
</feature>
<feature type="binding site" description="axial binding residue" evidence="2">
    <location>
        <position position="98"/>
    </location>
    <ligand>
        <name>heme b</name>
        <dbReference type="ChEBI" id="CHEBI:60344"/>
        <label>b566</label>
    </ligand>
    <ligandPart>
        <name>Fe</name>
        <dbReference type="ChEBI" id="CHEBI:18248"/>
    </ligandPart>
</feature>
<feature type="binding site" description="axial binding residue" evidence="2">
    <location>
        <position position="183"/>
    </location>
    <ligand>
        <name>heme b</name>
        <dbReference type="ChEBI" id="CHEBI:60344"/>
        <label>b562</label>
    </ligand>
    <ligandPart>
        <name>Fe</name>
        <dbReference type="ChEBI" id="CHEBI:18248"/>
    </ligandPart>
</feature>
<feature type="binding site" description="axial binding residue" evidence="2">
    <location>
        <position position="197"/>
    </location>
    <ligand>
        <name>heme b</name>
        <dbReference type="ChEBI" id="CHEBI:60344"/>
        <label>b566</label>
    </ligand>
    <ligandPart>
        <name>Fe</name>
        <dbReference type="ChEBI" id="CHEBI:18248"/>
    </ligandPart>
</feature>
<feature type="binding site" evidence="2">
    <location>
        <position position="202"/>
    </location>
    <ligand>
        <name>a ubiquinone</name>
        <dbReference type="ChEBI" id="CHEBI:16389"/>
    </ligand>
</feature>
<gene>
    <name type="primary">MT-CYB</name>
    <name type="synonym">COB</name>
    <name type="synonym">CYTB</name>
    <name type="synonym">MTCYB</name>
</gene>
<organism>
    <name type="scientific">Aerodramus vulcanorum</name>
    <name type="common">Volcano swiftlet</name>
    <name type="synonym">Collocalia vulcanorum</name>
    <dbReference type="NCBI Taxonomy" id="207699"/>
    <lineage>
        <taxon>Eukaryota</taxon>
        <taxon>Metazoa</taxon>
        <taxon>Chordata</taxon>
        <taxon>Craniata</taxon>
        <taxon>Vertebrata</taxon>
        <taxon>Euteleostomi</taxon>
        <taxon>Archelosauria</taxon>
        <taxon>Archosauria</taxon>
        <taxon>Dinosauria</taxon>
        <taxon>Saurischia</taxon>
        <taxon>Theropoda</taxon>
        <taxon>Coelurosauria</taxon>
        <taxon>Aves</taxon>
        <taxon>Neognathae</taxon>
        <taxon>Neoaves</taxon>
        <taxon>Strisores</taxon>
        <taxon>Apodiformes</taxon>
        <taxon>Apodidae</taxon>
        <taxon>Apodinae</taxon>
        <taxon>Aerodramus</taxon>
    </lineage>
</organism>
<comment type="function">
    <text evidence="2">Component of the ubiquinol-cytochrome c reductase complex (complex III or cytochrome b-c1 complex) that is part of the mitochondrial respiratory chain. The b-c1 complex mediates electron transfer from ubiquinol to cytochrome c. Contributes to the generation of a proton gradient across the mitochondrial membrane that is then used for ATP synthesis.</text>
</comment>
<comment type="cofactor">
    <cofactor evidence="2">
        <name>heme b</name>
        <dbReference type="ChEBI" id="CHEBI:60344"/>
    </cofactor>
    <text evidence="2">Binds 2 heme b groups non-covalently.</text>
</comment>
<comment type="subunit">
    <text evidence="2">The cytochrome bc1 complex contains 11 subunits: 3 respiratory subunits (MT-CYB, CYC1 and UQCRFS1), 2 core proteins (UQCRC1 and UQCRC2) and 6 low-molecular weight proteins (UQCRH/QCR6, UQCRB/QCR7, UQCRQ/QCR8, UQCR10/QCR9, UQCR11/QCR10 and a cleavage product of UQCRFS1). This cytochrome bc1 complex then forms a dimer.</text>
</comment>
<comment type="subcellular location">
    <subcellularLocation>
        <location evidence="2">Mitochondrion inner membrane</location>
        <topology evidence="2">Multi-pass membrane protein</topology>
    </subcellularLocation>
</comment>
<comment type="miscellaneous">
    <text evidence="1">Heme 1 (or BL or b562) is low-potential and absorbs at about 562 nm, and heme 2 (or BH or b566) is high-potential and absorbs at about 566 nm.</text>
</comment>
<comment type="similarity">
    <text evidence="3 4">Belongs to the cytochrome b family.</text>
</comment>
<comment type="caution">
    <text evidence="2">The full-length protein contains only eight transmembrane helices, not nine as predicted by bioinformatics tools.</text>
</comment>
<evidence type="ECO:0000250" key="1"/>
<evidence type="ECO:0000250" key="2">
    <source>
        <dbReference type="UniProtKB" id="P00157"/>
    </source>
</evidence>
<evidence type="ECO:0000255" key="3">
    <source>
        <dbReference type="PROSITE-ProRule" id="PRU00967"/>
    </source>
</evidence>
<evidence type="ECO:0000255" key="4">
    <source>
        <dbReference type="PROSITE-ProRule" id="PRU00968"/>
    </source>
</evidence>
<reference key="1">
    <citation type="journal article" date="2003" name="Mol. Phylogenet. Evol.">
        <title>A new phylogeny of swiftlets (Aves: Apodidae) based on cytochrome-b DNA.</title>
        <authorList>
            <person name="Thomassen H.A."/>
            <person name="Wiersema A.T."/>
            <person name="de Bakker M.A.G."/>
            <person name="de Knijff P."/>
            <person name="Hetebrij E."/>
            <person name="Povel G.D.E."/>
        </authorList>
    </citation>
    <scope>NUCLEOTIDE SEQUENCE [GENOMIC DNA]</scope>
    <source>
        <strain>Isolate V1</strain>
    </source>
</reference>